<keyword id="KW-1185">Reference proteome</keyword>
<keyword id="KW-0687">Ribonucleoprotein</keyword>
<keyword id="KW-0689">Ribosomal protein</keyword>
<keyword id="KW-0694">RNA-binding</keyword>
<keyword id="KW-0699">rRNA-binding</keyword>
<proteinExistence type="inferred from homology"/>
<comment type="function">
    <text evidence="1">One of the primary rRNA binding proteins, it binds specifically to the 5'-end of 16S ribosomal RNA.</text>
</comment>
<comment type="subunit">
    <text evidence="1">Part of the 30S ribosomal subunit.</text>
</comment>
<comment type="similarity">
    <text evidence="1">Belongs to the universal ribosomal protein uS17 family.</text>
</comment>
<reference key="1">
    <citation type="journal article" date="1997" name="Nature">
        <title>The complete genome sequence of the hyperthermophilic, sulphate-reducing archaeon Archaeoglobus fulgidus.</title>
        <authorList>
            <person name="Klenk H.-P."/>
            <person name="Clayton R.A."/>
            <person name="Tomb J.-F."/>
            <person name="White O."/>
            <person name="Nelson K.E."/>
            <person name="Ketchum K.A."/>
            <person name="Dodson R.J."/>
            <person name="Gwinn M.L."/>
            <person name="Hickey E.K."/>
            <person name="Peterson J.D."/>
            <person name="Richardson D.L."/>
            <person name="Kerlavage A.R."/>
            <person name="Graham D.E."/>
            <person name="Kyrpides N.C."/>
            <person name="Fleischmann R.D."/>
            <person name="Quackenbush J."/>
            <person name="Lee N.H."/>
            <person name="Sutton G.G."/>
            <person name="Gill S.R."/>
            <person name="Kirkness E.F."/>
            <person name="Dougherty B.A."/>
            <person name="McKenney K."/>
            <person name="Adams M.D."/>
            <person name="Loftus B.J."/>
            <person name="Peterson S.N."/>
            <person name="Reich C.I."/>
            <person name="McNeil L.K."/>
            <person name="Badger J.H."/>
            <person name="Glodek A."/>
            <person name="Zhou L."/>
            <person name="Overbeek R."/>
            <person name="Gocayne J.D."/>
            <person name="Weidman J.F."/>
            <person name="McDonald L.A."/>
            <person name="Utterback T.R."/>
            <person name="Cotton M.D."/>
            <person name="Spriggs T."/>
            <person name="Artiach P."/>
            <person name="Kaine B.P."/>
            <person name="Sykes S.M."/>
            <person name="Sadow P.W."/>
            <person name="D'Andrea K.P."/>
            <person name="Bowman C."/>
            <person name="Fujii C."/>
            <person name="Garland S.A."/>
            <person name="Mason T.M."/>
            <person name="Olsen G.J."/>
            <person name="Fraser C.M."/>
            <person name="Smith H.O."/>
            <person name="Woese C.R."/>
            <person name="Venter J.C."/>
        </authorList>
    </citation>
    <scope>NUCLEOTIDE SEQUENCE [LARGE SCALE GENOMIC DNA]</scope>
    <source>
        <strain>ATCC 49558 / DSM 4304 / JCM 9628 / NBRC 100126 / VC-16</strain>
    </source>
</reference>
<accession>O28363</accession>
<name>RS17_ARCFU</name>
<protein>
    <recommendedName>
        <fullName evidence="1">Small ribosomal subunit protein uS17</fullName>
    </recommendedName>
    <alternativeName>
        <fullName evidence="2">30S ribosomal protein S17</fullName>
    </alternativeName>
</protein>
<gene>
    <name evidence="1" type="primary">rps17</name>
    <name type="ordered locus">AF_1916</name>
</gene>
<sequence>MRDIGIDVKPPERECEDENCPFHGTLSVRGQLLRGKVVKVYGKTAVIERELIRYVPKFERYMKKRSKLHAHNPRCIRARPGDIVTIGECRPISKTKSFVILEVVGNEGNKS</sequence>
<dbReference type="EMBL" id="AE000782">
    <property type="protein sequence ID" value="AAB89337.1"/>
    <property type="molecule type" value="Genomic_DNA"/>
</dbReference>
<dbReference type="PIR" id="C69489">
    <property type="entry name" value="C69489"/>
</dbReference>
<dbReference type="RefSeq" id="WP_010879409.1">
    <property type="nucleotide sequence ID" value="NC_000917.1"/>
</dbReference>
<dbReference type="SMR" id="O28363"/>
<dbReference type="STRING" id="224325.AF_1916"/>
<dbReference type="PaxDb" id="224325-AF_1916"/>
<dbReference type="EnsemblBacteria" id="AAB89337">
    <property type="protein sequence ID" value="AAB89337"/>
    <property type="gene ID" value="AF_1916"/>
</dbReference>
<dbReference type="KEGG" id="afu:AF_1916"/>
<dbReference type="eggNOG" id="arCOG04096">
    <property type="taxonomic scope" value="Archaea"/>
</dbReference>
<dbReference type="HOGENOM" id="CLU_073626_0_3_2"/>
<dbReference type="OrthoDB" id="10698at2157"/>
<dbReference type="PhylomeDB" id="O28363"/>
<dbReference type="Proteomes" id="UP000002199">
    <property type="component" value="Chromosome"/>
</dbReference>
<dbReference type="GO" id="GO:0022627">
    <property type="term" value="C:cytosolic small ribosomal subunit"/>
    <property type="evidence" value="ECO:0007669"/>
    <property type="project" value="TreeGrafter"/>
</dbReference>
<dbReference type="GO" id="GO:0019843">
    <property type="term" value="F:rRNA binding"/>
    <property type="evidence" value="ECO:0007669"/>
    <property type="project" value="UniProtKB-UniRule"/>
</dbReference>
<dbReference type="GO" id="GO:0003735">
    <property type="term" value="F:structural constituent of ribosome"/>
    <property type="evidence" value="ECO:0007669"/>
    <property type="project" value="InterPro"/>
</dbReference>
<dbReference type="GO" id="GO:0006412">
    <property type="term" value="P:translation"/>
    <property type="evidence" value="ECO:0007669"/>
    <property type="project" value="UniProtKB-UniRule"/>
</dbReference>
<dbReference type="CDD" id="cd00364">
    <property type="entry name" value="Ribosomal_uS17"/>
    <property type="match status" value="1"/>
</dbReference>
<dbReference type="Gene3D" id="2.40.50.1000">
    <property type="match status" value="1"/>
</dbReference>
<dbReference type="HAMAP" id="MF_01345_A">
    <property type="entry name" value="Ribosomal_uS17_A"/>
    <property type="match status" value="1"/>
</dbReference>
<dbReference type="InterPro" id="IPR012340">
    <property type="entry name" value="NA-bd_OB-fold"/>
</dbReference>
<dbReference type="InterPro" id="IPR000266">
    <property type="entry name" value="Ribosomal_uS17"/>
</dbReference>
<dbReference type="InterPro" id="IPR028333">
    <property type="entry name" value="Ribosomal_uS17_arc/euk"/>
</dbReference>
<dbReference type="InterPro" id="IPR019978">
    <property type="entry name" value="Ribosomal_uS17_archaeal"/>
</dbReference>
<dbReference type="InterPro" id="IPR019979">
    <property type="entry name" value="Ribosomal_uS17_CS"/>
</dbReference>
<dbReference type="NCBIfam" id="NF006345">
    <property type="entry name" value="PRK08572.1"/>
    <property type="match status" value="1"/>
</dbReference>
<dbReference type="NCBIfam" id="TIGR03630">
    <property type="entry name" value="uS17_arch"/>
    <property type="match status" value="1"/>
</dbReference>
<dbReference type="PANTHER" id="PTHR10744">
    <property type="entry name" value="40S RIBOSOMAL PROTEIN S11 FAMILY MEMBER"/>
    <property type="match status" value="1"/>
</dbReference>
<dbReference type="PANTHER" id="PTHR10744:SF9">
    <property type="entry name" value="40S RIBOSOMAL PROTEIN S11-RELATED"/>
    <property type="match status" value="1"/>
</dbReference>
<dbReference type="Pfam" id="PF00366">
    <property type="entry name" value="Ribosomal_S17"/>
    <property type="match status" value="1"/>
</dbReference>
<dbReference type="PRINTS" id="PR00973">
    <property type="entry name" value="RIBOSOMALS17"/>
</dbReference>
<dbReference type="SUPFAM" id="SSF50249">
    <property type="entry name" value="Nucleic acid-binding proteins"/>
    <property type="match status" value="1"/>
</dbReference>
<dbReference type="PROSITE" id="PS00056">
    <property type="entry name" value="RIBOSOMAL_S17"/>
    <property type="match status" value="1"/>
</dbReference>
<evidence type="ECO:0000255" key="1">
    <source>
        <dbReference type="HAMAP-Rule" id="MF_01345"/>
    </source>
</evidence>
<evidence type="ECO:0000305" key="2"/>
<feature type="chain" id="PRO_0000128496" description="Small ribosomal subunit protein uS17">
    <location>
        <begin position="1"/>
        <end position="111"/>
    </location>
</feature>
<organism>
    <name type="scientific">Archaeoglobus fulgidus (strain ATCC 49558 / DSM 4304 / JCM 9628 / NBRC 100126 / VC-16)</name>
    <dbReference type="NCBI Taxonomy" id="224325"/>
    <lineage>
        <taxon>Archaea</taxon>
        <taxon>Methanobacteriati</taxon>
        <taxon>Methanobacteriota</taxon>
        <taxon>Archaeoglobi</taxon>
        <taxon>Archaeoglobales</taxon>
        <taxon>Archaeoglobaceae</taxon>
        <taxon>Archaeoglobus</taxon>
    </lineage>
</organism>